<gene>
    <name evidence="1" type="primary">pepA</name>
    <name type="ordered locus">PMT9312_1430</name>
</gene>
<evidence type="ECO:0000255" key="1">
    <source>
        <dbReference type="HAMAP-Rule" id="MF_00181"/>
    </source>
</evidence>
<accession>Q319F5</accession>
<reference key="1">
    <citation type="journal article" date="2006" name="Science">
        <title>Genomic islands and the ecology and evolution of Prochlorococcus.</title>
        <authorList>
            <person name="Coleman M.L."/>
            <person name="Sullivan M.B."/>
            <person name="Martiny A.C."/>
            <person name="Steglich C."/>
            <person name="Barry K."/>
            <person name="Delong E.F."/>
            <person name="Chisholm S.W."/>
        </authorList>
    </citation>
    <scope>NUCLEOTIDE SEQUENCE [LARGE SCALE GENOMIC DNA]</scope>
    <source>
        <strain>MIT 9312</strain>
    </source>
</reference>
<comment type="function">
    <text evidence="1">Presumably involved in the processing and regular turnover of intracellular proteins. Catalyzes the removal of unsubstituted N-terminal amino acids from various peptides.</text>
</comment>
<comment type="catalytic activity">
    <reaction evidence="1">
        <text>Release of an N-terminal amino acid, Xaa-|-Yaa-, in which Xaa is preferably Leu, but may be other amino acids including Pro although not Arg or Lys, and Yaa may be Pro. Amino acid amides and methyl esters are also readily hydrolyzed, but rates on arylamides are exceedingly low.</text>
        <dbReference type="EC" id="3.4.11.1"/>
    </reaction>
</comment>
<comment type="catalytic activity">
    <reaction evidence="1">
        <text>Release of an N-terminal amino acid, preferentially leucine, but not glutamic or aspartic acids.</text>
        <dbReference type="EC" id="3.4.11.10"/>
    </reaction>
</comment>
<comment type="cofactor">
    <cofactor evidence="1">
        <name>Mn(2+)</name>
        <dbReference type="ChEBI" id="CHEBI:29035"/>
    </cofactor>
    <text evidence="1">Binds 2 manganese ions per subunit.</text>
</comment>
<comment type="subcellular location">
    <subcellularLocation>
        <location evidence="1">Cytoplasm</location>
    </subcellularLocation>
</comment>
<comment type="similarity">
    <text evidence="1">Belongs to the peptidase M17 family.</text>
</comment>
<keyword id="KW-0031">Aminopeptidase</keyword>
<keyword id="KW-0963">Cytoplasm</keyword>
<keyword id="KW-0378">Hydrolase</keyword>
<keyword id="KW-0464">Manganese</keyword>
<keyword id="KW-0479">Metal-binding</keyword>
<keyword id="KW-0645">Protease</keyword>
<proteinExistence type="inferred from homology"/>
<dbReference type="EC" id="3.4.11.1" evidence="1"/>
<dbReference type="EC" id="3.4.11.10" evidence="1"/>
<dbReference type="EMBL" id="CP000111">
    <property type="protein sequence ID" value="ABB50490.1"/>
    <property type="molecule type" value="Genomic_DNA"/>
</dbReference>
<dbReference type="RefSeq" id="WP_011376974.1">
    <property type="nucleotide sequence ID" value="NC_007577.1"/>
</dbReference>
<dbReference type="SMR" id="Q319F5"/>
<dbReference type="STRING" id="74546.PMT9312_1430"/>
<dbReference type="MEROPS" id="M17.A01"/>
<dbReference type="KEGG" id="pmi:PMT9312_1430"/>
<dbReference type="eggNOG" id="COG0260">
    <property type="taxonomic scope" value="Bacteria"/>
</dbReference>
<dbReference type="HOGENOM" id="CLU_013734_2_2_3"/>
<dbReference type="OrthoDB" id="9809354at2"/>
<dbReference type="Proteomes" id="UP000002715">
    <property type="component" value="Chromosome"/>
</dbReference>
<dbReference type="GO" id="GO:0005737">
    <property type="term" value="C:cytoplasm"/>
    <property type="evidence" value="ECO:0007669"/>
    <property type="project" value="UniProtKB-SubCell"/>
</dbReference>
<dbReference type="GO" id="GO:0030145">
    <property type="term" value="F:manganese ion binding"/>
    <property type="evidence" value="ECO:0007669"/>
    <property type="project" value="UniProtKB-UniRule"/>
</dbReference>
<dbReference type="GO" id="GO:0070006">
    <property type="term" value="F:metalloaminopeptidase activity"/>
    <property type="evidence" value="ECO:0007669"/>
    <property type="project" value="InterPro"/>
</dbReference>
<dbReference type="GO" id="GO:0006508">
    <property type="term" value="P:proteolysis"/>
    <property type="evidence" value="ECO:0007669"/>
    <property type="project" value="UniProtKB-KW"/>
</dbReference>
<dbReference type="CDD" id="cd00433">
    <property type="entry name" value="Peptidase_M17"/>
    <property type="match status" value="1"/>
</dbReference>
<dbReference type="Gene3D" id="3.40.220.10">
    <property type="entry name" value="Leucine Aminopeptidase, subunit E, domain 1"/>
    <property type="match status" value="1"/>
</dbReference>
<dbReference type="Gene3D" id="3.40.630.10">
    <property type="entry name" value="Zn peptidases"/>
    <property type="match status" value="1"/>
</dbReference>
<dbReference type="HAMAP" id="MF_00181">
    <property type="entry name" value="Cytosol_peptidase_M17"/>
    <property type="match status" value="1"/>
</dbReference>
<dbReference type="InterPro" id="IPR011356">
    <property type="entry name" value="Leucine_aapep/pepB"/>
</dbReference>
<dbReference type="InterPro" id="IPR043472">
    <property type="entry name" value="Macro_dom-like"/>
</dbReference>
<dbReference type="InterPro" id="IPR000819">
    <property type="entry name" value="Peptidase_M17_C"/>
</dbReference>
<dbReference type="InterPro" id="IPR023042">
    <property type="entry name" value="Peptidase_M17_leu_NH2_pept"/>
</dbReference>
<dbReference type="InterPro" id="IPR008283">
    <property type="entry name" value="Peptidase_M17_N"/>
</dbReference>
<dbReference type="NCBIfam" id="NF002073">
    <property type="entry name" value="PRK00913.1-2"/>
    <property type="match status" value="1"/>
</dbReference>
<dbReference type="NCBIfam" id="NF002074">
    <property type="entry name" value="PRK00913.1-4"/>
    <property type="match status" value="1"/>
</dbReference>
<dbReference type="NCBIfam" id="NF002076">
    <property type="entry name" value="PRK00913.2-3"/>
    <property type="match status" value="1"/>
</dbReference>
<dbReference type="PANTHER" id="PTHR11963:SF23">
    <property type="entry name" value="CYTOSOL AMINOPEPTIDASE"/>
    <property type="match status" value="1"/>
</dbReference>
<dbReference type="PANTHER" id="PTHR11963">
    <property type="entry name" value="LEUCINE AMINOPEPTIDASE-RELATED"/>
    <property type="match status" value="1"/>
</dbReference>
<dbReference type="Pfam" id="PF00883">
    <property type="entry name" value="Peptidase_M17"/>
    <property type="match status" value="1"/>
</dbReference>
<dbReference type="Pfam" id="PF02789">
    <property type="entry name" value="Peptidase_M17_N"/>
    <property type="match status" value="1"/>
</dbReference>
<dbReference type="PRINTS" id="PR00481">
    <property type="entry name" value="LAMNOPPTDASE"/>
</dbReference>
<dbReference type="SUPFAM" id="SSF52949">
    <property type="entry name" value="Macro domain-like"/>
    <property type="match status" value="1"/>
</dbReference>
<dbReference type="SUPFAM" id="SSF53187">
    <property type="entry name" value="Zn-dependent exopeptidases"/>
    <property type="match status" value="1"/>
</dbReference>
<dbReference type="PROSITE" id="PS00631">
    <property type="entry name" value="CYTOSOL_AP"/>
    <property type="match status" value="1"/>
</dbReference>
<protein>
    <recommendedName>
        <fullName evidence="1">Probable cytosol aminopeptidase</fullName>
        <ecNumber evidence="1">3.4.11.1</ecNumber>
    </recommendedName>
    <alternativeName>
        <fullName evidence="1">Leucine aminopeptidase</fullName>
        <shortName evidence="1">LAP</shortName>
        <ecNumber evidence="1">3.4.11.10</ecNumber>
    </alternativeName>
    <alternativeName>
        <fullName evidence="1">Leucyl aminopeptidase</fullName>
    </alternativeName>
</protein>
<feature type="chain" id="PRO_1000019951" description="Probable cytosol aminopeptidase">
    <location>
        <begin position="1"/>
        <end position="490"/>
    </location>
</feature>
<feature type="active site" evidence="1">
    <location>
        <position position="269"/>
    </location>
</feature>
<feature type="active site" evidence="1">
    <location>
        <position position="345"/>
    </location>
</feature>
<feature type="binding site" evidence="1">
    <location>
        <position position="257"/>
    </location>
    <ligand>
        <name>Mn(2+)</name>
        <dbReference type="ChEBI" id="CHEBI:29035"/>
        <label>2</label>
    </ligand>
</feature>
<feature type="binding site" evidence="1">
    <location>
        <position position="262"/>
    </location>
    <ligand>
        <name>Mn(2+)</name>
        <dbReference type="ChEBI" id="CHEBI:29035"/>
        <label>1</label>
    </ligand>
</feature>
<feature type="binding site" evidence="1">
    <location>
        <position position="262"/>
    </location>
    <ligand>
        <name>Mn(2+)</name>
        <dbReference type="ChEBI" id="CHEBI:29035"/>
        <label>2</label>
    </ligand>
</feature>
<feature type="binding site" evidence="1">
    <location>
        <position position="281"/>
    </location>
    <ligand>
        <name>Mn(2+)</name>
        <dbReference type="ChEBI" id="CHEBI:29035"/>
        <label>2</label>
    </ligand>
</feature>
<feature type="binding site" evidence="1">
    <location>
        <position position="341"/>
    </location>
    <ligand>
        <name>Mn(2+)</name>
        <dbReference type="ChEBI" id="CHEBI:29035"/>
        <label>1</label>
    </ligand>
</feature>
<feature type="binding site" evidence="1">
    <location>
        <position position="343"/>
    </location>
    <ligand>
        <name>Mn(2+)</name>
        <dbReference type="ChEBI" id="CHEBI:29035"/>
        <label>1</label>
    </ligand>
</feature>
<feature type="binding site" evidence="1">
    <location>
        <position position="343"/>
    </location>
    <ligand>
        <name>Mn(2+)</name>
        <dbReference type="ChEBI" id="CHEBI:29035"/>
        <label>2</label>
    </ligand>
</feature>
<name>AMPA_PROM9</name>
<organism>
    <name type="scientific">Prochlorococcus marinus (strain MIT 9312)</name>
    <dbReference type="NCBI Taxonomy" id="74546"/>
    <lineage>
        <taxon>Bacteria</taxon>
        <taxon>Bacillati</taxon>
        <taxon>Cyanobacteriota</taxon>
        <taxon>Cyanophyceae</taxon>
        <taxon>Synechococcales</taxon>
        <taxon>Prochlorococcaceae</taxon>
        <taxon>Prochlorococcus</taxon>
    </lineage>
</organism>
<sequence length="490" mass="53573">MQFSTFQKNLDNWQGASLIFGVLEEEIASQLENIKFIVDPKLLLKKVTQKKFKGEKGETLSFEFLDQKLETLIIVGLGKSKYLNKSDIENSIGNLIRKTVDKNEKISILLPWELINSQLEINQLAESARLSAYKDNRFNKKKDEKKVLKEIEFLNFKSFENICFEEAEKICEGVELARRLVAAPPNSLTPQEMSMQASQIAKDHGLEVKILEAKECEDLGMGAYLAVAKGSDLDPKFIHLTLKSEGPIKEKIAIVGKGLTFDSGGYNLKVGASQIEMMKYDMGGSAAVLGAAKALGAIKPKGLEIHFIVAACENMINGSAVHPGDVVKASNGKTIEINNTDAEGRLTLADALTYASDLKPDSIIDLATLTGAIVVALGNDVAGFWSNNDDLANDLKAASAQAGEELWRMPLQKAYKEGLKSHIADMKNTGPRAGGSITAALFLEEFFDTEIKWAHIDIAGTCWTDKNKGINPSGATGFGVKTLVQWIKNK</sequence>